<sequence>MNPLSVGNQAPAFTLLNQQEKFVSLSDFRGKKVLIYFYPKALTPGCTTQACGLRDSKSELDVLGLVVLGISPDAPKKLAQFIEKKELNFTLLSDPDHQVAEQFGVWGEKKFMGRTYDGIHRISFLINESGTIMQVFDKFKIKDHHQMIIDYLRSL</sequence>
<organism>
    <name type="scientific">Haemophilus influenzae (strain ATCC 51907 / DSM 11121 / KW20 / Rd)</name>
    <dbReference type="NCBI Taxonomy" id="71421"/>
    <lineage>
        <taxon>Bacteria</taxon>
        <taxon>Pseudomonadati</taxon>
        <taxon>Pseudomonadota</taxon>
        <taxon>Gammaproteobacteria</taxon>
        <taxon>Pasteurellales</taxon>
        <taxon>Pasteurellaceae</taxon>
        <taxon>Haemophilus</taxon>
    </lineage>
</organism>
<name>BCP_HAEIN</name>
<comment type="function">
    <text evidence="1">Thiol-specific peroxidase that catalyzes the reduction of hydrogen peroxide and organic hydroperoxides to water and alcohols, respectively. Plays a role in cell protection against oxidative stress by detoxifying peroxides and as sensor of hydrogen peroxide-mediated signaling events.</text>
</comment>
<comment type="catalytic activity">
    <reaction evidence="1">
        <text>a hydroperoxide + [thioredoxin]-dithiol = an alcohol + [thioredoxin]-disulfide + H2O</text>
        <dbReference type="Rhea" id="RHEA:62620"/>
        <dbReference type="Rhea" id="RHEA-COMP:10698"/>
        <dbReference type="Rhea" id="RHEA-COMP:10700"/>
        <dbReference type="ChEBI" id="CHEBI:15377"/>
        <dbReference type="ChEBI" id="CHEBI:29950"/>
        <dbReference type="ChEBI" id="CHEBI:30879"/>
        <dbReference type="ChEBI" id="CHEBI:35924"/>
        <dbReference type="ChEBI" id="CHEBI:50058"/>
        <dbReference type="EC" id="1.11.1.24"/>
    </reaction>
</comment>
<comment type="subunit">
    <text evidence="1">Monomer.</text>
</comment>
<comment type="miscellaneous">
    <text evidence="1">The active site is a conserved redox-active cysteine residue, the peroxidatic cysteine (C(P)), which makes the nucleophilic attack on the peroxide substrate. The peroxide oxidizes the C(P)-SH to cysteine sulfenic acid (C(P)-SOH), which then reacts with another cysteine residue, the resolving cysteine (C(R)), to form a disulfide bridge. The disulfide is subsequently reduced by an appropriate electron donor to complete the catalytic cycle. In this atypical 2-Cys peroxiredoxin, C(R) is present in the same subunit to form an intramolecular disulfide. The disulfide is subsequently reduced by thioredoxin.</text>
</comment>
<comment type="similarity">
    <text evidence="3">Belongs to the peroxiredoxin family. BCP/PrxQ subfamily.</text>
</comment>
<reference key="1">
    <citation type="journal article" date="1995" name="Science">
        <title>Whole-genome random sequencing and assembly of Haemophilus influenzae Rd.</title>
        <authorList>
            <person name="Fleischmann R.D."/>
            <person name="Adams M.D."/>
            <person name="White O."/>
            <person name="Clayton R.A."/>
            <person name="Kirkness E.F."/>
            <person name="Kerlavage A.R."/>
            <person name="Bult C.J."/>
            <person name="Tomb J.-F."/>
            <person name="Dougherty B.A."/>
            <person name="Merrick J.M."/>
            <person name="McKenney K."/>
            <person name="Sutton G.G."/>
            <person name="FitzHugh W."/>
            <person name="Fields C.A."/>
            <person name="Gocayne J.D."/>
            <person name="Scott J.D."/>
            <person name="Shirley R."/>
            <person name="Liu L.-I."/>
            <person name="Glodek A."/>
            <person name="Kelley J.M."/>
            <person name="Weidman J.F."/>
            <person name="Phillips C.A."/>
            <person name="Spriggs T."/>
            <person name="Hedblom E."/>
            <person name="Cotton M.D."/>
            <person name="Utterback T.R."/>
            <person name="Hanna M.C."/>
            <person name="Nguyen D.T."/>
            <person name="Saudek D.M."/>
            <person name="Brandon R.C."/>
            <person name="Fine L.D."/>
            <person name="Fritchman J.L."/>
            <person name="Fuhrmann J.L."/>
            <person name="Geoghagen N.S.M."/>
            <person name="Gnehm C.L."/>
            <person name="McDonald L.A."/>
            <person name="Small K.V."/>
            <person name="Fraser C.M."/>
            <person name="Smith H.O."/>
            <person name="Venter J.C."/>
        </authorList>
    </citation>
    <scope>NUCLEOTIDE SEQUENCE [LARGE SCALE GENOMIC DNA]</scope>
    <source>
        <strain>ATCC 51907 / DSM 11121 / KW20 / Rd</strain>
    </source>
</reference>
<feature type="chain" id="PRO_0000135137" description="Putative peroxiredoxin bcp">
    <location>
        <begin position="1"/>
        <end position="155"/>
    </location>
</feature>
<feature type="domain" description="Thioredoxin" evidence="2">
    <location>
        <begin position="4"/>
        <end position="155"/>
    </location>
</feature>
<feature type="active site" description="Cysteine sulfenic acid (-SOH) intermediate" evidence="1">
    <location>
        <position position="46"/>
    </location>
</feature>
<feature type="disulfide bond" description="Redox-active" evidence="1">
    <location>
        <begin position="46"/>
        <end position="51"/>
    </location>
</feature>
<gene>
    <name type="primary">bcp</name>
    <name type="ordered locus">HI_0254</name>
</gene>
<accession>P44411</accession>
<evidence type="ECO:0000250" key="1">
    <source>
        <dbReference type="UniProtKB" id="P0AE52"/>
    </source>
</evidence>
<evidence type="ECO:0000255" key="2">
    <source>
        <dbReference type="PROSITE-ProRule" id="PRU00691"/>
    </source>
</evidence>
<evidence type="ECO:0000305" key="3"/>
<proteinExistence type="inferred from homology"/>
<dbReference type="EC" id="1.11.1.24" evidence="1"/>
<dbReference type="EMBL" id="L42023">
    <property type="protein sequence ID" value="AAC21920.1"/>
    <property type="molecule type" value="Genomic_DNA"/>
</dbReference>
<dbReference type="PIR" id="I64057">
    <property type="entry name" value="I64057"/>
</dbReference>
<dbReference type="RefSeq" id="NP_438423.1">
    <property type="nucleotide sequence ID" value="NC_000907.1"/>
</dbReference>
<dbReference type="SMR" id="P44411"/>
<dbReference type="STRING" id="71421.HI_0254"/>
<dbReference type="EnsemblBacteria" id="AAC21920">
    <property type="protein sequence ID" value="AAC21920"/>
    <property type="gene ID" value="HI_0254"/>
</dbReference>
<dbReference type="KEGG" id="hin:HI_0254"/>
<dbReference type="PATRIC" id="fig|71421.8.peg.269"/>
<dbReference type="eggNOG" id="COG1225">
    <property type="taxonomic scope" value="Bacteria"/>
</dbReference>
<dbReference type="HOGENOM" id="CLU_042529_14_1_6"/>
<dbReference type="OrthoDB" id="9812811at2"/>
<dbReference type="PhylomeDB" id="P44411"/>
<dbReference type="BioCyc" id="HINF71421:G1GJ1-268-MONOMER"/>
<dbReference type="Proteomes" id="UP000000579">
    <property type="component" value="Chromosome"/>
</dbReference>
<dbReference type="GO" id="GO:0005737">
    <property type="term" value="C:cytoplasm"/>
    <property type="evidence" value="ECO:0000318"/>
    <property type="project" value="GO_Central"/>
</dbReference>
<dbReference type="GO" id="GO:0008379">
    <property type="term" value="F:thioredoxin peroxidase activity"/>
    <property type="evidence" value="ECO:0000318"/>
    <property type="project" value="GO_Central"/>
</dbReference>
<dbReference type="GO" id="GO:0045454">
    <property type="term" value="P:cell redox homeostasis"/>
    <property type="evidence" value="ECO:0000318"/>
    <property type="project" value="GO_Central"/>
</dbReference>
<dbReference type="GO" id="GO:0034599">
    <property type="term" value="P:cellular response to oxidative stress"/>
    <property type="evidence" value="ECO:0000318"/>
    <property type="project" value="GO_Central"/>
</dbReference>
<dbReference type="CDD" id="cd03017">
    <property type="entry name" value="PRX_BCP"/>
    <property type="match status" value="1"/>
</dbReference>
<dbReference type="FunFam" id="3.40.30.10:FF:000007">
    <property type="entry name" value="Thioredoxin-dependent thiol peroxidase"/>
    <property type="match status" value="1"/>
</dbReference>
<dbReference type="Gene3D" id="3.40.30.10">
    <property type="entry name" value="Glutaredoxin"/>
    <property type="match status" value="1"/>
</dbReference>
<dbReference type="InterPro" id="IPR000866">
    <property type="entry name" value="AhpC/TSA"/>
</dbReference>
<dbReference type="InterPro" id="IPR050924">
    <property type="entry name" value="Peroxiredoxin_BCP/PrxQ"/>
</dbReference>
<dbReference type="InterPro" id="IPR036249">
    <property type="entry name" value="Thioredoxin-like_sf"/>
</dbReference>
<dbReference type="InterPro" id="IPR013766">
    <property type="entry name" value="Thioredoxin_domain"/>
</dbReference>
<dbReference type="NCBIfam" id="NF006960">
    <property type="entry name" value="PRK09437.1"/>
    <property type="match status" value="1"/>
</dbReference>
<dbReference type="PANTHER" id="PTHR42801:SF4">
    <property type="entry name" value="AHPC_TSA FAMILY PROTEIN"/>
    <property type="match status" value="1"/>
</dbReference>
<dbReference type="PANTHER" id="PTHR42801">
    <property type="entry name" value="THIOREDOXIN-DEPENDENT PEROXIDE REDUCTASE"/>
    <property type="match status" value="1"/>
</dbReference>
<dbReference type="Pfam" id="PF00578">
    <property type="entry name" value="AhpC-TSA"/>
    <property type="match status" value="1"/>
</dbReference>
<dbReference type="SUPFAM" id="SSF52833">
    <property type="entry name" value="Thioredoxin-like"/>
    <property type="match status" value="1"/>
</dbReference>
<dbReference type="PROSITE" id="PS51352">
    <property type="entry name" value="THIOREDOXIN_2"/>
    <property type="match status" value="1"/>
</dbReference>
<keyword id="KW-0049">Antioxidant</keyword>
<keyword id="KW-1015">Disulfide bond</keyword>
<keyword id="KW-0560">Oxidoreductase</keyword>
<keyword id="KW-0575">Peroxidase</keyword>
<keyword id="KW-0676">Redox-active center</keyword>
<keyword id="KW-1185">Reference proteome</keyword>
<protein>
    <recommendedName>
        <fullName>Putative peroxiredoxin bcp</fullName>
        <ecNumber evidence="1">1.11.1.24</ecNumber>
    </recommendedName>
    <alternativeName>
        <fullName>Bacterioferritin comigratory protein homolog</fullName>
    </alternativeName>
    <alternativeName>
        <fullName>Thioredoxin peroxidase</fullName>
    </alternativeName>
    <alternativeName>
        <fullName evidence="3">Thioredoxin-dependent peroxiredoxin Bcp</fullName>
    </alternativeName>
</protein>